<protein>
    <recommendedName>
        <fullName evidence="1">6,7-dimethyl-8-ribityllumazine synthase</fullName>
        <shortName evidence="1">DMRL synthase</shortName>
        <shortName evidence="1">LS</shortName>
        <shortName evidence="1">Lumazine synthase</shortName>
        <ecNumber evidence="1">2.5.1.78</ecNumber>
    </recommendedName>
</protein>
<organism>
    <name type="scientific">Bacillus pumilus (strain SAFR-032)</name>
    <dbReference type="NCBI Taxonomy" id="315750"/>
    <lineage>
        <taxon>Bacteria</taxon>
        <taxon>Bacillati</taxon>
        <taxon>Bacillota</taxon>
        <taxon>Bacilli</taxon>
        <taxon>Bacillales</taxon>
        <taxon>Bacillaceae</taxon>
        <taxon>Bacillus</taxon>
    </lineage>
</organism>
<name>RISB_BACP2</name>
<accession>A8FER2</accession>
<dbReference type="EC" id="2.5.1.78" evidence="1"/>
<dbReference type="EMBL" id="CP000813">
    <property type="protein sequence ID" value="ABV62729.1"/>
    <property type="molecule type" value="Genomic_DNA"/>
</dbReference>
<dbReference type="SMR" id="A8FER2"/>
<dbReference type="STRING" id="315750.BPUM_2059"/>
<dbReference type="GeneID" id="5621324"/>
<dbReference type="eggNOG" id="COG0054">
    <property type="taxonomic scope" value="Bacteria"/>
</dbReference>
<dbReference type="HOGENOM" id="CLU_089358_1_1_9"/>
<dbReference type="OrthoDB" id="9809709at2"/>
<dbReference type="UniPathway" id="UPA00275">
    <property type="reaction ID" value="UER00404"/>
</dbReference>
<dbReference type="Proteomes" id="UP000001355">
    <property type="component" value="Chromosome"/>
</dbReference>
<dbReference type="GO" id="GO:0005829">
    <property type="term" value="C:cytosol"/>
    <property type="evidence" value="ECO:0007669"/>
    <property type="project" value="TreeGrafter"/>
</dbReference>
<dbReference type="GO" id="GO:0009349">
    <property type="term" value="C:riboflavin synthase complex"/>
    <property type="evidence" value="ECO:0007669"/>
    <property type="project" value="InterPro"/>
</dbReference>
<dbReference type="GO" id="GO:0000906">
    <property type="term" value="F:6,7-dimethyl-8-ribityllumazine synthase activity"/>
    <property type="evidence" value="ECO:0007669"/>
    <property type="project" value="UniProtKB-UniRule"/>
</dbReference>
<dbReference type="GO" id="GO:0009231">
    <property type="term" value="P:riboflavin biosynthetic process"/>
    <property type="evidence" value="ECO:0007669"/>
    <property type="project" value="UniProtKB-UniRule"/>
</dbReference>
<dbReference type="CDD" id="cd09209">
    <property type="entry name" value="Lumazine_synthase-I"/>
    <property type="match status" value="1"/>
</dbReference>
<dbReference type="FunFam" id="3.40.50.960:FF:000001">
    <property type="entry name" value="6,7-dimethyl-8-ribityllumazine synthase"/>
    <property type="match status" value="1"/>
</dbReference>
<dbReference type="Gene3D" id="3.40.50.960">
    <property type="entry name" value="Lumazine/riboflavin synthase"/>
    <property type="match status" value="1"/>
</dbReference>
<dbReference type="HAMAP" id="MF_00178">
    <property type="entry name" value="Lumazine_synth"/>
    <property type="match status" value="1"/>
</dbReference>
<dbReference type="InterPro" id="IPR034964">
    <property type="entry name" value="LS"/>
</dbReference>
<dbReference type="InterPro" id="IPR002180">
    <property type="entry name" value="LS/RS"/>
</dbReference>
<dbReference type="InterPro" id="IPR036467">
    <property type="entry name" value="LS/RS_sf"/>
</dbReference>
<dbReference type="NCBIfam" id="TIGR00114">
    <property type="entry name" value="lumazine-synth"/>
    <property type="match status" value="1"/>
</dbReference>
<dbReference type="NCBIfam" id="NF000812">
    <property type="entry name" value="PRK00061.1-4"/>
    <property type="match status" value="1"/>
</dbReference>
<dbReference type="PANTHER" id="PTHR21058:SF0">
    <property type="entry name" value="6,7-DIMETHYL-8-RIBITYLLUMAZINE SYNTHASE"/>
    <property type="match status" value="1"/>
</dbReference>
<dbReference type="PANTHER" id="PTHR21058">
    <property type="entry name" value="6,7-DIMETHYL-8-RIBITYLLUMAZINE SYNTHASE DMRL SYNTHASE LUMAZINE SYNTHASE"/>
    <property type="match status" value="1"/>
</dbReference>
<dbReference type="Pfam" id="PF00885">
    <property type="entry name" value="DMRL_synthase"/>
    <property type="match status" value="1"/>
</dbReference>
<dbReference type="SUPFAM" id="SSF52121">
    <property type="entry name" value="Lumazine synthase"/>
    <property type="match status" value="1"/>
</dbReference>
<sequence>MNTIQGHVVAEGLKFAIVVARFNDFITSKLLDGAEDTLLRHGANGDDIDVVWVPGAFEIPYMAKKLAETEKYDAVITLGTVIRGATTHYDYVCNEAAKGIAQSAMSTGVPIIFGVLTTESIEQAIERAGTKAGNKGSESAAAAIEMANLNRTFR</sequence>
<feature type="chain" id="PRO_1000058364" description="6,7-dimethyl-8-ribityllumazine synthase">
    <location>
        <begin position="1"/>
        <end position="154"/>
    </location>
</feature>
<feature type="active site" description="Proton donor" evidence="1">
    <location>
        <position position="88"/>
    </location>
</feature>
<feature type="binding site" evidence="1">
    <location>
        <position position="22"/>
    </location>
    <ligand>
        <name>5-amino-6-(D-ribitylamino)uracil</name>
        <dbReference type="ChEBI" id="CHEBI:15934"/>
    </ligand>
</feature>
<feature type="binding site" evidence="1">
    <location>
        <begin position="56"/>
        <end position="58"/>
    </location>
    <ligand>
        <name>5-amino-6-(D-ribitylamino)uracil</name>
        <dbReference type="ChEBI" id="CHEBI:15934"/>
    </ligand>
</feature>
<feature type="binding site" evidence="1">
    <location>
        <begin position="80"/>
        <end position="82"/>
    </location>
    <ligand>
        <name>5-amino-6-(D-ribitylamino)uracil</name>
        <dbReference type="ChEBI" id="CHEBI:15934"/>
    </ligand>
</feature>
<feature type="binding site" evidence="1">
    <location>
        <begin position="85"/>
        <end position="86"/>
    </location>
    <ligand>
        <name>(2S)-2-hydroxy-3-oxobutyl phosphate</name>
        <dbReference type="ChEBI" id="CHEBI:58830"/>
    </ligand>
</feature>
<feature type="binding site" evidence="1">
    <location>
        <position position="113"/>
    </location>
    <ligand>
        <name>5-amino-6-(D-ribitylamino)uracil</name>
        <dbReference type="ChEBI" id="CHEBI:15934"/>
    </ligand>
</feature>
<feature type="binding site" evidence="1">
    <location>
        <position position="127"/>
    </location>
    <ligand>
        <name>(2S)-2-hydroxy-3-oxobutyl phosphate</name>
        <dbReference type="ChEBI" id="CHEBI:58830"/>
    </ligand>
</feature>
<keyword id="KW-0686">Riboflavin biosynthesis</keyword>
<keyword id="KW-0808">Transferase</keyword>
<proteinExistence type="inferred from homology"/>
<comment type="function">
    <text evidence="1">Catalyzes the formation of 6,7-dimethyl-8-ribityllumazine by condensation of 5-amino-6-(D-ribitylamino)uracil with 3,4-dihydroxy-2-butanone 4-phosphate. This is the penultimate step in the biosynthesis of riboflavin.</text>
</comment>
<comment type="catalytic activity">
    <reaction evidence="1">
        <text>(2S)-2-hydroxy-3-oxobutyl phosphate + 5-amino-6-(D-ribitylamino)uracil = 6,7-dimethyl-8-(1-D-ribityl)lumazine + phosphate + 2 H2O + H(+)</text>
        <dbReference type="Rhea" id="RHEA:26152"/>
        <dbReference type="ChEBI" id="CHEBI:15377"/>
        <dbReference type="ChEBI" id="CHEBI:15378"/>
        <dbReference type="ChEBI" id="CHEBI:15934"/>
        <dbReference type="ChEBI" id="CHEBI:43474"/>
        <dbReference type="ChEBI" id="CHEBI:58201"/>
        <dbReference type="ChEBI" id="CHEBI:58830"/>
        <dbReference type="EC" id="2.5.1.78"/>
    </reaction>
</comment>
<comment type="pathway">
    <text evidence="1">Cofactor biosynthesis; riboflavin biosynthesis; riboflavin from 2-hydroxy-3-oxobutyl phosphate and 5-amino-6-(D-ribitylamino)uracil: step 1/2.</text>
</comment>
<comment type="subunit">
    <text evidence="1">Forms an icosahedral capsid composed of 60 subunits, arranged as a dodecamer of pentamers.</text>
</comment>
<comment type="similarity">
    <text evidence="1">Belongs to the DMRL synthase family.</text>
</comment>
<gene>
    <name evidence="1" type="primary">ribH</name>
    <name type="ordered locus">BPUM_2059</name>
</gene>
<reference key="1">
    <citation type="journal article" date="2007" name="PLoS ONE">
        <title>Paradoxical DNA repair and peroxide resistance gene conservation in Bacillus pumilus SAFR-032.</title>
        <authorList>
            <person name="Gioia J."/>
            <person name="Yerrapragada S."/>
            <person name="Qin X."/>
            <person name="Jiang H."/>
            <person name="Igboeli O.C."/>
            <person name="Muzny D."/>
            <person name="Dugan-Rocha S."/>
            <person name="Ding Y."/>
            <person name="Hawes A."/>
            <person name="Liu W."/>
            <person name="Perez L."/>
            <person name="Kovar C."/>
            <person name="Dinh H."/>
            <person name="Lee S."/>
            <person name="Nazareth L."/>
            <person name="Blyth P."/>
            <person name="Holder M."/>
            <person name="Buhay C."/>
            <person name="Tirumalai M.R."/>
            <person name="Liu Y."/>
            <person name="Dasgupta I."/>
            <person name="Bokhetache L."/>
            <person name="Fujita M."/>
            <person name="Karouia F."/>
            <person name="Eswara Moorthy P."/>
            <person name="Siefert J."/>
            <person name="Uzman A."/>
            <person name="Buzumbo P."/>
            <person name="Verma A."/>
            <person name="Zwiya H."/>
            <person name="McWilliams B.D."/>
            <person name="Olowu A."/>
            <person name="Clinkenbeard K.D."/>
            <person name="Newcombe D."/>
            <person name="Golebiewski L."/>
            <person name="Petrosino J.F."/>
            <person name="Nicholson W.L."/>
            <person name="Fox G.E."/>
            <person name="Venkateswaran K."/>
            <person name="Highlander S.K."/>
            <person name="Weinstock G.M."/>
        </authorList>
    </citation>
    <scope>NUCLEOTIDE SEQUENCE [LARGE SCALE GENOMIC DNA]</scope>
    <source>
        <strain>SAFR-032</strain>
    </source>
</reference>
<evidence type="ECO:0000255" key="1">
    <source>
        <dbReference type="HAMAP-Rule" id="MF_00178"/>
    </source>
</evidence>